<sequence length="360" mass="41179">MDIKMDNFTTPSAASLESDCDLYAHHHTARILMPLHYSIVFIIGLVGNLLALIVIIQNRKKINSTTLYSTNLVISDILFTTALPTRIAYYALGFDWRIGDALCRITALVFYINTYAGVNFMTCLSIDRFFAVVHPLRYNKIKRIEHAKCICIFVWILVFGQTLPLLINPMSKQEAERTTCMEYPNFEETKSLPWILLGACFIGYVLPLVIILICYSQICCKLFKTAKQNPLTEKSGVNKKALNTIIFIIVVFVVCFTPYHVAIIQHMIKKLRLPGLLECSQRHSFQISLHFTVCLMNFNCCMDPFIYFFACKGYKRKVMKMLKRQVSVSISSAVRSAPEENSREMTETQMMIHSKSLNGK</sequence>
<gene>
    <name type="primary">GPR183</name>
</gene>
<protein>
    <recommendedName>
        <fullName>G-protein coupled receptor 183</fullName>
    </recommendedName>
</protein>
<name>GP183_BOVIN</name>
<feature type="chain" id="PRO_0000383155" description="G-protein coupled receptor 183">
    <location>
        <begin position="1"/>
        <end position="360"/>
    </location>
</feature>
<feature type="topological domain" description="Extracellular" evidence="4">
    <location>
        <begin position="1"/>
        <end position="30"/>
    </location>
</feature>
<feature type="transmembrane region" description="Helical; Name=1" evidence="4">
    <location>
        <begin position="31"/>
        <end position="56"/>
    </location>
</feature>
<feature type="topological domain" description="Cytoplasmic" evidence="4">
    <location>
        <begin position="57"/>
        <end position="76"/>
    </location>
</feature>
<feature type="transmembrane region" description="Helical; Name=2" evidence="4">
    <location>
        <begin position="77"/>
        <end position="94"/>
    </location>
</feature>
<feature type="topological domain" description="Extracellular" evidence="4">
    <location>
        <begin position="95"/>
        <end position="104"/>
    </location>
</feature>
<feature type="transmembrane region" description="Helical; Name=3" evidence="4">
    <location>
        <begin position="105"/>
        <end position="126"/>
    </location>
</feature>
<feature type="topological domain" description="Cytoplasmic" evidence="4">
    <location>
        <begin position="127"/>
        <end position="148"/>
    </location>
</feature>
<feature type="transmembrane region" description="Helical; Name=4" evidence="4">
    <location>
        <begin position="149"/>
        <end position="167"/>
    </location>
</feature>
<feature type="topological domain" description="Extracellular" evidence="4">
    <location>
        <begin position="168"/>
        <end position="191"/>
    </location>
</feature>
<feature type="transmembrane region" description="Helical; Name=5" evidence="4">
    <location>
        <begin position="192"/>
        <end position="214"/>
    </location>
</feature>
<feature type="topological domain" description="Cytoplasmic" evidence="4">
    <location>
        <begin position="215"/>
        <end position="240"/>
    </location>
</feature>
<feature type="transmembrane region" description="Helical; Name=6" evidence="4">
    <location>
        <begin position="241"/>
        <end position="264"/>
    </location>
</feature>
<feature type="topological domain" description="Extracellular" evidence="4">
    <location>
        <begin position="265"/>
        <end position="286"/>
    </location>
</feature>
<feature type="transmembrane region" description="Helical; Name=7" evidence="4">
    <location>
        <begin position="287"/>
        <end position="311"/>
    </location>
</feature>
<feature type="topological domain" description="Cytoplasmic" evidence="4">
    <location>
        <begin position="312"/>
        <end position="360"/>
    </location>
</feature>
<feature type="region of interest" description="Interaction with G proteins" evidence="1">
    <location>
        <begin position="125"/>
        <end position="133"/>
    </location>
</feature>
<feature type="region of interest" description="Disordered" evidence="6">
    <location>
        <begin position="339"/>
        <end position="360"/>
    </location>
</feature>
<feature type="compositionally biased region" description="Polar residues" evidence="6">
    <location>
        <begin position="347"/>
        <end position="360"/>
    </location>
</feature>
<feature type="binding site" evidence="2">
    <location>
        <position position="86"/>
    </location>
    <ligand>
        <name>7alpha,25-dihydroxycholesterol</name>
        <dbReference type="ChEBI" id="CHEBI:37623"/>
        <note>agonist</note>
    </ligand>
</feature>
<feature type="binding site" evidence="2">
    <location>
        <position position="111"/>
    </location>
    <ligand>
        <name>7alpha,25-dihydroxycholesterol</name>
        <dbReference type="ChEBI" id="CHEBI:37623"/>
        <note>agonist</note>
    </ligand>
</feature>
<feature type="binding site" evidence="2">
    <location>
        <position position="115"/>
    </location>
    <ligand>
        <name>7alpha,25-dihydroxycholesterol</name>
        <dbReference type="ChEBI" id="CHEBI:37623"/>
        <note>agonist</note>
    </ligand>
</feature>
<feature type="binding site" evidence="2">
    <location>
        <position position="259"/>
    </location>
    <ligand>
        <name>7alpha,25-dihydroxycholesterol</name>
        <dbReference type="ChEBI" id="CHEBI:37623"/>
        <note>agonist</note>
    </ligand>
</feature>
<feature type="modified residue" description="Phosphoserine" evidence="3">
    <location>
        <position position="327"/>
    </location>
</feature>
<feature type="glycosylation site" description="N-linked (GlcNAc...) asparagine" evidence="4">
    <location>
        <position position="7"/>
    </location>
</feature>
<feature type="disulfide bond" evidence="5">
    <location>
        <begin position="103"/>
        <end position="180"/>
    </location>
</feature>
<comment type="function">
    <text evidence="2 3">G-protein coupled receptor expressed in lymphocytes that acts as a chemotactic receptor for B-cells, T-cells, splenic dendritic cells, monocytes/macrophages and astrocytes (By similarity). Receptor for oxysterol 7-alpha,25-dihydroxycholesterol (7-alpha,25-OHC) and other related oxysterols (By similarity). Mediates cell positioning and movement of a number of cells by binding the 7-alpha,25-OHC ligand that forms a chemotactic gradient (By similarity). Binding of 7-alpha,25-OHC mediates the correct localization of B-cells during humoral immune responses (By similarity). Guides B-cell movement along the B-cell zone-T-cell zone boundary and later to interfollicular and outer follicular regions (By similarity). Its specific expression during B-cell maturation helps position B-cells appropriately for mounting T-dependent antibody responses (By similarity). Collaborates with CXCR5 to mediate B-cell migration; probably by forming a heterodimer with CXCR5 that affects the interaction between of CXCL13 and CXCR5 (By similarity). Also acts as a chemotactic receptor for some T-cells upon binding to 7-alpha,25-OHC ligand (By similarity). Promotes follicular helper T (Tfh) cells differentiation by positioning activated T-cells at the follicle-T-zone interface, promoting contact of newly activated CD4 T-cells with activated dendritic cells and exposing them to Tfh-cell-promoting inducible costimulator (ICOS) ligand (By similarity). Expression in splenic dendritic cells is required for their homeostasis, localization and ability to induce B- and T-cell responses: GPR183 acts as a chemotactic receptor in dendritic cells that mediates the accumulation of CD4(+) dendritic cells in bridging channels (By similarity). Regulates migration of astrocytes and is involved in communication between astrocytes and macrophages (By similarity). Promotes osteoclast precursor migration to bone surfaces (By similarity). Signals constitutively through G(i)-alpha, but not G(s)-alpha or G(q)-alpha (By similarity). Signals constitutively also via MAPK1/3 (ERK1/2) (By similarity).</text>
</comment>
<comment type="subunit">
    <text evidence="2">Homodimer and heterodimer. Heterodimerizes with CXCR5; leading to modulate the interaction between of CXCL13 and CXCR5.</text>
</comment>
<comment type="subcellular location">
    <subcellularLocation>
        <location evidence="2">Cell membrane</location>
        <topology evidence="4">Multi-pass membrane protein</topology>
    </subcellularLocation>
</comment>
<comment type="similarity">
    <text evidence="5">Belongs to the G-protein coupled receptor 1 family.</text>
</comment>
<reference key="1">
    <citation type="submission" date="2006-04" db="EMBL/GenBank/DDBJ databases">
        <authorList>
            <consortium name="NIH - Mammalian Gene Collection (MGC) project"/>
        </authorList>
    </citation>
    <scope>NUCLEOTIDE SEQUENCE [LARGE SCALE MRNA]</scope>
    <source>
        <strain>Hereford</strain>
        <tissue>Thymus</tissue>
    </source>
</reference>
<proteinExistence type="evidence at transcript level"/>
<evidence type="ECO:0000250" key="1"/>
<evidence type="ECO:0000250" key="2">
    <source>
        <dbReference type="UniProtKB" id="P32249"/>
    </source>
</evidence>
<evidence type="ECO:0000250" key="3">
    <source>
        <dbReference type="UniProtKB" id="Q3U6B2"/>
    </source>
</evidence>
<evidence type="ECO:0000255" key="4"/>
<evidence type="ECO:0000255" key="5">
    <source>
        <dbReference type="PROSITE-ProRule" id="PRU00521"/>
    </source>
</evidence>
<evidence type="ECO:0000256" key="6">
    <source>
        <dbReference type="SAM" id="MobiDB-lite"/>
    </source>
</evidence>
<accession>Q1RMI1</accession>
<organism>
    <name type="scientific">Bos taurus</name>
    <name type="common">Bovine</name>
    <dbReference type="NCBI Taxonomy" id="9913"/>
    <lineage>
        <taxon>Eukaryota</taxon>
        <taxon>Metazoa</taxon>
        <taxon>Chordata</taxon>
        <taxon>Craniata</taxon>
        <taxon>Vertebrata</taxon>
        <taxon>Euteleostomi</taxon>
        <taxon>Mammalia</taxon>
        <taxon>Eutheria</taxon>
        <taxon>Laurasiatheria</taxon>
        <taxon>Artiodactyla</taxon>
        <taxon>Ruminantia</taxon>
        <taxon>Pecora</taxon>
        <taxon>Bovidae</taxon>
        <taxon>Bovinae</taxon>
        <taxon>Bos</taxon>
    </lineage>
</organism>
<dbReference type="EMBL" id="BC114884">
    <property type="protein sequence ID" value="AAI14885.1"/>
    <property type="molecule type" value="mRNA"/>
</dbReference>
<dbReference type="RefSeq" id="NP_001039937.1">
    <property type="nucleotide sequence ID" value="NM_001046472.2"/>
</dbReference>
<dbReference type="RefSeq" id="XP_005214015.1">
    <property type="nucleotide sequence ID" value="XM_005213958.5"/>
</dbReference>
<dbReference type="RefSeq" id="XP_005214016.1">
    <property type="nucleotide sequence ID" value="XM_005213959.5"/>
</dbReference>
<dbReference type="SMR" id="Q1RMI1"/>
<dbReference type="FunCoup" id="Q1RMI1">
    <property type="interactions" value="517"/>
</dbReference>
<dbReference type="STRING" id="9913.ENSBTAP00000007471"/>
<dbReference type="GlyCosmos" id="Q1RMI1">
    <property type="glycosylation" value="1 site, No reported glycans"/>
</dbReference>
<dbReference type="GlyGen" id="Q1RMI1">
    <property type="glycosylation" value="1 site"/>
</dbReference>
<dbReference type="PaxDb" id="9913-ENSBTAP00000007471"/>
<dbReference type="Ensembl" id="ENSBTAT00000007471.5">
    <property type="protein sequence ID" value="ENSBTAP00000007471.3"/>
    <property type="gene ID" value="ENSBTAG00000032084.3"/>
</dbReference>
<dbReference type="Ensembl" id="ENSBTAT00000088985.1">
    <property type="protein sequence ID" value="ENSBTAP00000090439.1"/>
    <property type="gene ID" value="ENSBTAG00000032084.3"/>
</dbReference>
<dbReference type="Ensembl" id="ENSBTAT00000095876.1">
    <property type="protein sequence ID" value="ENSBTAP00000085663.1"/>
    <property type="gene ID" value="ENSBTAG00000032084.3"/>
</dbReference>
<dbReference type="GeneID" id="540287"/>
<dbReference type="KEGG" id="bta:540287"/>
<dbReference type="CTD" id="1880"/>
<dbReference type="VEuPathDB" id="HostDB:ENSBTAG00000032084"/>
<dbReference type="VGNC" id="VGNC:29577">
    <property type="gene designation" value="GPR183"/>
</dbReference>
<dbReference type="eggNOG" id="ENOG502QWD9">
    <property type="taxonomic scope" value="Eukaryota"/>
</dbReference>
<dbReference type="GeneTree" id="ENSGT01030000234518"/>
<dbReference type="HOGENOM" id="CLU_009579_8_2_1"/>
<dbReference type="InParanoid" id="Q1RMI1"/>
<dbReference type="OMA" id="NERTTCM"/>
<dbReference type="OrthoDB" id="10021141at2759"/>
<dbReference type="TreeFam" id="TF350009"/>
<dbReference type="Reactome" id="R-BTA-373076">
    <property type="pathway name" value="Class A/1 (Rhodopsin-like receptors)"/>
</dbReference>
<dbReference type="Reactome" id="R-BTA-418594">
    <property type="pathway name" value="G alpha (i) signalling events"/>
</dbReference>
<dbReference type="Proteomes" id="UP000009136">
    <property type="component" value="Chromosome 12"/>
</dbReference>
<dbReference type="Bgee" id="ENSBTAG00000032084">
    <property type="expression patterns" value="Expressed in milk and 91 other cell types or tissues"/>
</dbReference>
<dbReference type="GO" id="GO:0005654">
    <property type="term" value="C:nucleoplasm"/>
    <property type="evidence" value="ECO:0007669"/>
    <property type="project" value="Ensembl"/>
</dbReference>
<dbReference type="GO" id="GO:0005886">
    <property type="term" value="C:plasma membrane"/>
    <property type="evidence" value="ECO:0000250"/>
    <property type="project" value="UniProtKB"/>
</dbReference>
<dbReference type="GO" id="GO:0004930">
    <property type="term" value="F:G protein-coupled receptor activity"/>
    <property type="evidence" value="ECO:0000250"/>
    <property type="project" value="UniProtKB"/>
</dbReference>
<dbReference type="GO" id="GO:0008142">
    <property type="term" value="F:oxysterol binding"/>
    <property type="evidence" value="ECO:0000250"/>
    <property type="project" value="UniProtKB"/>
</dbReference>
<dbReference type="GO" id="GO:0002250">
    <property type="term" value="P:adaptive immune response"/>
    <property type="evidence" value="ECO:0000250"/>
    <property type="project" value="UniProtKB"/>
</dbReference>
<dbReference type="GO" id="GO:0002312">
    <property type="term" value="P:B cell activation involved in immune response"/>
    <property type="evidence" value="ECO:0000318"/>
    <property type="project" value="GO_Central"/>
</dbReference>
<dbReference type="GO" id="GO:0002407">
    <property type="term" value="P:dendritic cell chemotaxis"/>
    <property type="evidence" value="ECO:0000250"/>
    <property type="project" value="UniProtKB"/>
</dbReference>
<dbReference type="GO" id="GO:0036145">
    <property type="term" value="P:dendritic cell homeostasis"/>
    <property type="evidence" value="ECO:0000250"/>
    <property type="project" value="UniProtKB"/>
</dbReference>
<dbReference type="GO" id="GO:0007186">
    <property type="term" value="P:G protein-coupled receptor signaling pathway"/>
    <property type="evidence" value="ECO:0000250"/>
    <property type="project" value="UniProtKB"/>
</dbReference>
<dbReference type="GO" id="GO:0006959">
    <property type="term" value="P:humoral immune response"/>
    <property type="evidence" value="ECO:0000250"/>
    <property type="project" value="UniProtKB"/>
</dbReference>
<dbReference type="GO" id="GO:0030595">
    <property type="term" value="P:leukocyte chemotaxis"/>
    <property type="evidence" value="ECO:0000250"/>
    <property type="project" value="UniProtKB"/>
</dbReference>
<dbReference type="GO" id="GO:0002313">
    <property type="term" value="P:mature B cell differentiation involved in immune response"/>
    <property type="evidence" value="ECO:0000250"/>
    <property type="project" value="UniProtKB"/>
</dbReference>
<dbReference type="GO" id="GO:0030316">
    <property type="term" value="P:osteoclast differentiation"/>
    <property type="evidence" value="ECO:0000250"/>
    <property type="project" value="UniProtKB"/>
</dbReference>
<dbReference type="GO" id="GO:0030890">
    <property type="term" value="P:positive regulation of B cell proliferation"/>
    <property type="evidence" value="ECO:0000250"/>
    <property type="project" value="UniProtKB"/>
</dbReference>
<dbReference type="GO" id="GO:0070374">
    <property type="term" value="P:positive regulation of ERK1 and ERK2 cascade"/>
    <property type="evidence" value="ECO:0000250"/>
    <property type="project" value="UniProtKB"/>
</dbReference>
<dbReference type="GO" id="GO:2000458">
    <property type="term" value="P:regulation of astrocyte chemotaxis"/>
    <property type="evidence" value="ECO:0000250"/>
    <property type="project" value="UniProtKB"/>
</dbReference>
<dbReference type="GO" id="GO:0010818">
    <property type="term" value="P:T cell chemotaxis"/>
    <property type="evidence" value="ECO:0000250"/>
    <property type="project" value="UniProtKB"/>
</dbReference>
<dbReference type="GO" id="GO:0061470">
    <property type="term" value="P:T follicular helper cell differentiation"/>
    <property type="evidence" value="ECO:0000250"/>
    <property type="project" value="UniProtKB"/>
</dbReference>
<dbReference type="CDD" id="cd15159">
    <property type="entry name" value="7tmA_EBI2"/>
    <property type="match status" value="1"/>
</dbReference>
<dbReference type="FunFam" id="1.20.1070.10:FF:000017">
    <property type="entry name" value="lysophosphatidic acid receptor 4"/>
    <property type="match status" value="1"/>
</dbReference>
<dbReference type="Gene3D" id="1.20.1070.10">
    <property type="entry name" value="Rhodopsin 7-helix transmembrane proteins"/>
    <property type="match status" value="1"/>
</dbReference>
<dbReference type="InterPro" id="IPR047160">
    <property type="entry name" value="GP183-like"/>
</dbReference>
<dbReference type="InterPro" id="IPR000276">
    <property type="entry name" value="GPCR_Rhodpsn"/>
</dbReference>
<dbReference type="InterPro" id="IPR017452">
    <property type="entry name" value="GPCR_Rhodpsn_7TM"/>
</dbReference>
<dbReference type="PANTHER" id="PTHR24237">
    <property type="entry name" value="G-PROTEIN COUPLED RECEPTOR"/>
    <property type="match status" value="1"/>
</dbReference>
<dbReference type="PANTHER" id="PTHR24237:SF7">
    <property type="entry name" value="G-PROTEIN COUPLED RECEPTOR 183"/>
    <property type="match status" value="1"/>
</dbReference>
<dbReference type="Pfam" id="PF00001">
    <property type="entry name" value="7tm_1"/>
    <property type="match status" value="1"/>
</dbReference>
<dbReference type="PRINTS" id="PR00237">
    <property type="entry name" value="GPCRRHODOPSN"/>
</dbReference>
<dbReference type="PRINTS" id="PR01157">
    <property type="entry name" value="P2YPURNOCPTR"/>
</dbReference>
<dbReference type="SMART" id="SM01381">
    <property type="entry name" value="7TM_GPCR_Srsx"/>
    <property type="match status" value="1"/>
</dbReference>
<dbReference type="SUPFAM" id="SSF81321">
    <property type="entry name" value="Family A G protein-coupled receptor-like"/>
    <property type="match status" value="1"/>
</dbReference>
<dbReference type="PROSITE" id="PS00237">
    <property type="entry name" value="G_PROTEIN_RECEP_F1_1"/>
    <property type="match status" value="1"/>
</dbReference>
<dbReference type="PROSITE" id="PS50262">
    <property type="entry name" value="G_PROTEIN_RECEP_F1_2"/>
    <property type="match status" value="1"/>
</dbReference>
<keyword id="KW-1064">Adaptive immunity</keyword>
<keyword id="KW-1003">Cell membrane</keyword>
<keyword id="KW-1015">Disulfide bond</keyword>
<keyword id="KW-0297">G-protein coupled receptor</keyword>
<keyword id="KW-0325">Glycoprotein</keyword>
<keyword id="KW-0391">Immunity</keyword>
<keyword id="KW-0472">Membrane</keyword>
<keyword id="KW-0597">Phosphoprotein</keyword>
<keyword id="KW-0675">Receptor</keyword>
<keyword id="KW-1185">Reference proteome</keyword>
<keyword id="KW-0807">Transducer</keyword>
<keyword id="KW-0812">Transmembrane</keyword>
<keyword id="KW-1133">Transmembrane helix</keyword>